<organism>
    <name type="scientific">Prochlorococcus marinus (strain MIT 9313)</name>
    <dbReference type="NCBI Taxonomy" id="74547"/>
    <lineage>
        <taxon>Bacteria</taxon>
        <taxon>Bacillati</taxon>
        <taxon>Cyanobacteriota</taxon>
        <taxon>Cyanophyceae</taxon>
        <taxon>Synechococcales</taxon>
        <taxon>Prochlorococcaceae</taxon>
        <taxon>Prochlorococcus</taxon>
    </lineage>
</organism>
<proteinExistence type="inferred from homology"/>
<name>GCSH_PROMM</name>
<keyword id="KW-0450">Lipoyl</keyword>
<keyword id="KW-1185">Reference proteome</keyword>
<gene>
    <name evidence="1" type="primary">gcvH</name>
    <name type="ordered locus">PMT_2170</name>
</gene>
<sequence length="132" mass="14395">MAFQFPDHFRFADTHEYASLDGELVRIGISAFAVDQLGDIVFVDLPEVGDRLNRGTTFGSVESVKAVEDLHAPISGELVRINESVLSSPDELQNDPHGEGWLLVVRPADPAQLQDLMDAATYANKVAIESSN</sequence>
<accession>Q7TUJ2</accession>
<feature type="chain" id="PRO_0000302414" description="Glycine cleavage system H protein">
    <location>
        <begin position="1"/>
        <end position="132"/>
    </location>
</feature>
<feature type="domain" description="Lipoyl-binding" evidence="2">
    <location>
        <begin position="24"/>
        <end position="106"/>
    </location>
</feature>
<feature type="modified residue" description="N6-lipoyllysine" evidence="1">
    <location>
        <position position="65"/>
    </location>
</feature>
<evidence type="ECO:0000255" key="1">
    <source>
        <dbReference type="HAMAP-Rule" id="MF_00272"/>
    </source>
</evidence>
<evidence type="ECO:0000255" key="2">
    <source>
        <dbReference type="PROSITE-ProRule" id="PRU01066"/>
    </source>
</evidence>
<reference key="1">
    <citation type="journal article" date="2003" name="Nature">
        <title>Genome divergence in two Prochlorococcus ecotypes reflects oceanic niche differentiation.</title>
        <authorList>
            <person name="Rocap G."/>
            <person name="Larimer F.W."/>
            <person name="Lamerdin J.E."/>
            <person name="Malfatti S."/>
            <person name="Chain P."/>
            <person name="Ahlgren N.A."/>
            <person name="Arellano A."/>
            <person name="Coleman M."/>
            <person name="Hauser L."/>
            <person name="Hess W.R."/>
            <person name="Johnson Z.I."/>
            <person name="Land M.L."/>
            <person name="Lindell D."/>
            <person name="Post A.F."/>
            <person name="Regala W."/>
            <person name="Shah M."/>
            <person name="Shaw S.L."/>
            <person name="Steglich C."/>
            <person name="Sullivan M.B."/>
            <person name="Ting C.S."/>
            <person name="Tolonen A."/>
            <person name="Webb E.A."/>
            <person name="Zinser E.R."/>
            <person name="Chisholm S.W."/>
        </authorList>
    </citation>
    <scope>NUCLEOTIDE SEQUENCE [LARGE SCALE GENOMIC DNA]</scope>
    <source>
        <strain>MIT 9313</strain>
    </source>
</reference>
<comment type="function">
    <text evidence="1">The glycine cleavage system catalyzes the degradation of glycine. The H protein shuttles the methylamine group of glycine from the P protein to the T protein.</text>
</comment>
<comment type="cofactor">
    <cofactor evidence="1">
        <name>(R)-lipoate</name>
        <dbReference type="ChEBI" id="CHEBI:83088"/>
    </cofactor>
    <text evidence="1">Binds 1 lipoyl cofactor covalently.</text>
</comment>
<comment type="subunit">
    <text evidence="1">The glycine cleavage system is composed of four proteins: P, T, L and H.</text>
</comment>
<comment type="similarity">
    <text evidence="1">Belongs to the GcvH family.</text>
</comment>
<dbReference type="EMBL" id="BX548175">
    <property type="protein sequence ID" value="CAE22344.1"/>
    <property type="molecule type" value="Genomic_DNA"/>
</dbReference>
<dbReference type="RefSeq" id="WP_011131534.1">
    <property type="nucleotide sequence ID" value="NC_005071.1"/>
</dbReference>
<dbReference type="SMR" id="Q7TUJ2"/>
<dbReference type="KEGG" id="pmt:PMT_2170"/>
<dbReference type="eggNOG" id="COG0509">
    <property type="taxonomic scope" value="Bacteria"/>
</dbReference>
<dbReference type="HOGENOM" id="CLU_097408_2_2_3"/>
<dbReference type="OrthoDB" id="9796712at2"/>
<dbReference type="Proteomes" id="UP000001423">
    <property type="component" value="Chromosome"/>
</dbReference>
<dbReference type="GO" id="GO:0005829">
    <property type="term" value="C:cytosol"/>
    <property type="evidence" value="ECO:0007669"/>
    <property type="project" value="TreeGrafter"/>
</dbReference>
<dbReference type="GO" id="GO:0005960">
    <property type="term" value="C:glycine cleavage complex"/>
    <property type="evidence" value="ECO:0007669"/>
    <property type="project" value="InterPro"/>
</dbReference>
<dbReference type="GO" id="GO:0019464">
    <property type="term" value="P:glycine decarboxylation via glycine cleavage system"/>
    <property type="evidence" value="ECO:0007669"/>
    <property type="project" value="UniProtKB-UniRule"/>
</dbReference>
<dbReference type="CDD" id="cd06848">
    <property type="entry name" value="GCS_H"/>
    <property type="match status" value="1"/>
</dbReference>
<dbReference type="Gene3D" id="2.40.50.100">
    <property type="match status" value="1"/>
</dbReference>
<dbReference type="HAMAP" id="MF_00272">
    <property type="entry name" value="GcvH"/>
    <property type="match status" value="1"/>
</dbReference>
<dbReference type="InterPro" id="IPR003016">
    <property type="entry name" value="2-oxoA_DH_lipoyl-BS"/>
</dbReference>
<dbReference type="InterPro" id="IPR000089">
    <property type="entry name" value="Biotin_lipoyl"/>
</dbReference>
<dbReference type="InterPro" id="IPR002930">
    <property type="entry name" value="GCV_H"/>
</dbReference>
<dbReference type="InterPro" id="IPR033753">
    <property type="entry name" value="GCV_H/Fam206"/>
</dbReference>
<dbReference type="InterPro" id="IPR017453">
    <property type="entry name" value="GCV_H_sub"/>
</dbReference>
<dbReference type="InterPro" id="IPR011053">
    <property type="entry name" value="Single_hybrid_motif"/>
</dbReference>
<dbReference type="NCBIfam" id="TIGR00527">
    <property type="entry name" value="gcvH"/>
    <property type="match status" value="1"/>
</dbReference>
<dbReference type="NCBIfam" id="NF002270">
    <property type="entry name" value="PRK01202.1"/>
    <property type="match status" value="1"/>
</dbReference>
<dbReference type="PANTHER" id="PTHR11715">
    <property type="entry name" value="GLYCINE CLEAVAGE SYSTEM H PROTEIN"/>
    <property type="match status" value="1"/>
</dbReference>
<dbReference type="PANTHER" id="PTHR11715:SF3">
    <property type="entry name" value="GLYCINE CLEAVAGE SYSTEM H PROTEIN-RELATED"/>
    <property type="match status" value="1"/>
</dbReference>
<dbReference type="Pfam" id="PF01597">
    <property type="entry name" value="GCV_H"/>
    <property type="match status" value="1"/>
</dbReference>
<dbReference type="SUPFAM" id="SSF51230">
    <property type="entry name" value="Single hybrid motif"/>
    <property type="match status" value="1"/>
</dbReference>
<dbReference type="PROSITE" id="PS50968">
    <property type="entry name" value="BIOTINYL_LIPOYL"/>
    <property type="match status" value="1"/>
</dbReference>
<dbReference type="PROSITE" id="PS00189">
    <property type="entry name" value="LIPOYL"/>
    <property type="match status" value="1"/>
</dbReference>
<protein>
    <recommendedName>
        <fullName evidence="1">Glycine cleavage system H protein</fullName>
    </recommendedName>
</protein>